<keyword id="KW-0732">Signal</keyword>
<comment type="function">
    <text>Small vitellogenic protein found in females. It is synthesized in the fat body, secreted into the hemolymph, and taken up by developing oocytes.</text>
</comment>
<sequence length="249" mass="28007">MLRTTVVLLTLAAIAFAAPTSDDIYNNVVIGDIDGAVAKSKELQKQGKGDIITEAVNRLIRDSQRNTMEYAYQLWSLEARDIVKERFPIQFRMMLGEHSIKLINKRDNLAMKLGVATDNSGDRIAYGAADDKTSDRVAWKFVPLSEDKRVYFKILNVQRGQYLKLGVETDSDGEHMAYASSGADTFRHQWYLQPAKADGNLVFFIVNREYNHALKLGRSVDSMGDRQVWGHNGNVIGNPELFGWSVVAF</sequence>
<proteinExistence type="evidence at transcript level"/>
<name>VITM_MANSE</name>
<organism>
    <name type="scientific">Manduca sexta</name>
    <name type="common">Tobacco hawkmoth</name>
    <name type="synonym">Tobacco hornworm</name>
    <dbReference type="NCBI Taxonomy" id="7130"/>
    <lineage>
        <taxon>Eukaryota</taxon>
        <taxon>Metazoa</taxon>
        <taxon>Ecdysozoa</taxon>
        <taxon>Arthropoda</taxon>
        <taxon>Hexapoda</taxon>
        <taxon>Insecta</taxon>
        <taxon>Pterygota</taxon>
        <taxon>Neoptera</taxon>
        <taxon>Endopterygota</taxon>
        <taxon>Lepidoptera</taxon>
        <taxon>Glossata</taxon>
        <taxon>Ditrysia</taxon>
        <taxon>Bombycoidea</taxon>
        <taxon>Sphingidae</taxon>
        <taxon>Sphinginae</taxon>
        <taxon>Sphingini</taxon>
        <taxon>Manduca</taxon>
    </lineage>
</organism>
<feature type="signal peptide">
    <location>
        <begin position="1"/>
        <end position="17"/>
    </location>
</feature>
<feature type="chain" id="PRO_0000041597" description="Microvitellogenin">
    <location>
        <begin position="18"/>
        <end position="249"/>
    </location>
</feature>
<protein>
    <recommendedName>
        <fullName>Microvitellogenin</fullName>
    </recommendedName>
</protein>
<reference key="1">
    <citation type="journal article" date="1989" name="Gene">
        <title>The nucleotide sequence of a microvitellogenin encoding gene from the tobacco hornworm, Manduca sexta.</title>
        <authorList>
            <person name="Wang X."/>
            <person name="Cole K.D."/>
            <person name="Law J.H."/>
        </authorList>
    </citation>
    <scope>NUCLEOTIDE SEQUENCE [GENOMIC DNA]</scope>
</reference>
<reference key="2">
    <citation type="journal article" date="1988" name="J. Biol. Chem.">
        <title>cDNA cloning and deduced amino acid sequence of microvitellogenin, a female specific hemolymph and egg protein from the tobacco hornworm, Manduca sexta.</title>
        <authorList>
            <person name="Wang X."/>
            <person name="Cole K.D."/>
            <person name="Law J.H."/>
        </authorList>
    </citation>
    <scope>NUCLEOTIDE SEQUENCE [MRNA]</scope>
</reference>
<accession>P19616</accession>
<dbReference type="EMBL" id="M28820">
    <property type="protein sequence ID" value="AAA29323.1"/>
    <property type="molecule type" value="Genomic_DNA"/>
</dbReference>
<dbReference type="EMBL" id="J03768">
    <property type="protein sequence ID" value="AAA29342.1"/>
    <property type="molecule type" value="mRNA"/>
</dbReference>
<dbReference type="PIR" id="JQ0029">
    <property type="entry name" value="A28068"/>
</dbReference>
<dbReference type="SMR" id="P19616"/>
<dbReference type="EnsemblMetazoa" id="XM_030170256.2">
    <property type="protein sequence ID" value="XP_030026116.1"/>
    <property type="gene ID" value="LOC115444480"/>
</dbReference>
<dbReference type="EnsemblMetazoa" id="XM_037445398.1">
    <property type="protein sequence ID" value="XP_037301295.1"/>
    <property type="gene ID" value="LOC119191509"/>
</dbReference>
<dbReference type="OrthoDB" id="7401160at2759"/>
<dbReference type="GO" id="GO:0005576">
    <property type="term" value="C:extracellular region"/>
    <property type="evidence" value="ECO:0007669"/>
    <property type="project" value="InterPro"/>
</dbReference>
<dbReference type="Gene3D" id="2.80.10.50">
    <property type="match status" value="1"/>
</dbReference>
<dbReference type="Gene3D" id="1.10.10.2400">
    <property type="entry name" value="Lepidopteran low molecular weight (30 kD) lipoprotein, N-terminal domain"/>
    <property type="match status" value="1"/>
</dbReference>
<dbReference type="InterPro" id="IPR004943">
    <property type="entry name" value="Lipoprotein_11"/>
</dbReference>
<dbReference type="InterPro" id="IPR042046">
    <property type="entry name" value="Lipoprotein_11_N"/>
</dbReference>
<dbReference type="InterPro" id="IPR035992">
    <property type="entry name" value="Ricin_B-like_lectins"/>
</dbReference>
<dbReference type="Pfam" id="PF03260">
    <property type="entry name" value="Lipoprotein_11"/>
    <property type="match status" value="1"/>
</dbReference>
<dbReference type="SUPFAM" id="SSF50370">
    <property type="entry name" value="Ricin B-like lectins"/>
    <property type="match status" value="1"/>
</dbReference>
<gene>
    <name type="primary">MVG</name>
</gene>